<keyword id="KW-0963">Cytoplasm</keyword>
<keyword id="KW-0378">Hydrolase</keyword>
<keyword id="KW-0479">Metal-binding</keyword>
<keyword id="KW-0547">Nucleotide-binding</keyword>
<proteinExistence type="inferred from homology"/>
<comment type="function">
    <text evidence="1">Nucleotidase that shows phosphatase activity on nucleoside 5'-monophosphates.</text>
</comment>
<comment type="catalytic activity">
    <reaction evidence="1">
        <text>a ribonucleoside 5'-phosphate + H2O = a ribonucleoside + phosphate</text>
        <dbReference type="Rhea" id="RHEA:12484"/>
        <dbReference type="ChEBI" id="CHEBI:15377"/>
        <dbReference type="ChEBI" id="CHEBI:18254"/>
        <dbReference type="ChEBI" id="CHEBI:43474"/>
        <dbReference type="ChEBI" id="CHEBI:58043"/>
        <dbReference type="EC" id="3.1.3.5"/>
    </reaction>
</comment>
<comment type="cofactor">
    <cofactor evidence="1">
        <name>a divalent metal cation</name>
        <dbReference type="ChEBI" id="CHEBI:60240"/>
    </cofactor>
    <text evidence="1">Binds 1 divalent metal cation per subunit.</text>
</comment>
<comment type="subcellular location">
    <subcellularLocation>
        <location evidence="1">Cytoplasm</location>
    </subcellularLocation>
</comment>
<comment type="similarity">
    <text evidence="1">Belongs to the SurE nucleotidase family.</text>
</comment>
<dbReference type="EC" id="3.1.3.5" evidence="1"/>
<dbReference type="EMBL" id="BX572602">
    <property type="protein sequence ID" value="CAE28283.1"/>
    <property type="molecule type" value="Genomic_DNA"/>
</dbReference>
<dbReference type="RefSeq" id="WP_011158392.1">
    <property type="nucleotide sequence ID" value="NZ_CP116810.1"/>
</dbReference>
<dbReference type="SMR" id="Q6N5X7"/>
<dbReference type="STRING" id="258594.RPA2841"/>
<dbReference type="GeneID" id="66893919"/>
<dbReference type="eggNOG" id="COG0496">
    <property type="taxonomic scope" value="Bacteria"/>
</dbReference>
<dbReference type="HOGENOM" id="CLU_045192_1_2_5"/>
<dbReference type="PhylomeDB" id="Q6N5X7"/>
<dbReference type="GO" id="GO:0005737">
    <property type="term" value="C:cytoplasm"/>
    <property type="evidence" value="ECO:0007669"/>
    <property type="project" value="UniProtKB-SubCell"/>
</dbReference>
<dbReference type="GO" id="GO:0008254">
    <property type="term" value="F:3'-nucleotidase activity"/>
    <property type="evidence" value="ECO:0007669"/>
    <property type="project" value="TreeGrafter"/>
</dbReference>
<dbReference type="GO" id="GO:0008253">
    <property type="term" value="F:5'-nucleotidase activity"/>
    <property type="evidence" value="ECO:0007669"/>
    <property type="project" value="UniProtKB-UniRule"/>
</dbReference>
<dbReference type="GO" id="GO:0004309">
    <property type="term" value="F:exopolyphosphatase activity"/>
    <property type="evidence" value="ECO:0007669"/>
    <property type="project" value="TreeGrafter"/>
</dbReference>
<dbReference type="GO" id="GO:0046872">
    <property type="term" value="F:metal ion binding"/>
    <property type="evidence" value="ECO:0007669"/>
    <property type="project" value="UniProtKB-UniRule"/>
</dbReference>
<dbReference type="GO" id="GO:0000166">
    <property type="term" value="F:nucleotide binding"/>
    <property type="evidence" value="ECO:0007669"/>
    <property type="project" value="UniProtKB-KW"/>
</dbReference>
<dbReference type="FunFam" id="3.40.1210.10:FF:000001">
    <property type="entry name" value="5'/3'-nucleotidase SurE"/>
    <property type="match status" value="1"/>
</dbReference>
<dbReference type="Gene3D" id="3.40.1210.10">
    <property type="entry name" value="Survival protein SurE-like phosphatase/nucleotidase"/>
    <property type="match status" value="1"/>
</dbReference>
<dbReference type="HAMAP" id="MF_00060">
    <property type="entry name" value="SurE"/>
    <property type="match status" value="1"/>
</dbReference>
<dbReference type="InterPro" id="IPR030048">
    <property type="entry name" value="SurE"/>
</dbReference>
<dbReference type="InterPro" id="IPR002828">
    <property type="entry name" value="SurE-like_Pase/nucleotidase"/>
</dbReference>
<dbReference type="InterPro" id="IPR036523">
    <property type="entry name" value="SurE-like_sf"/>
</dbReference>
<dbReference type="NCBIfam" id="NF001490">
    <property type="entry name" value="PRK00346.1-4"/>
    <property type="match status" value="1"/>
</dbReference>
<dbReference type="NCBIfam" id="TIGR00087">
    <property type="entry name" value="surE"/>
    <property type="match status" value="1"/>
</dbReference>
<dbReference type="PANTHER" id="PTHR30457">
    <property type="entry name" value="5'-NUCLEOTIDASE SURE"/>
    <property type="match status" value="1"/>
</dbReference>
<dbReference type="PANTHER" id="PTHR30457:SF12">
    <property type="entry name" value="5'_3'-NUCLEOTIDASE SURE"/>
    <property type="match status" value="1"/>
</dbReference>
<dbReference type="Pfam" id="PF01975">
    <property type="entry name" value="SurE"/>
    <property type="match status" value="1"/>
</dbReference>
<dbReference type="SUPFAM" id="SSF64167">
    <property type="entry name" value="SurE-like"/>
    <property type="match status" value="1"/>
</dbReference>
<name>SURE_RHOPA</name>
<sequence length="255" mass="27695">MRILCTNDDGIHAPGLKTVEQIARAISDDVWVVAPELDQSGVSHSLSLNDPLRLREVGPRHFAVRGTPTDCVIMGSRFILKDKAPDLVLSGVNRGRNVAEDVVYSGTIAGALEGTILGLPSFALSQEFTIETRNAPLWETARTHAPDIIRKVMAAGVPKNTVVNINFPACTPDKVKGVVVTRQGKRNPGFLRIDERHDGRGNPYYWIGFERIKVEDMPAEGTDLAALAANFVSVTPLKLDRTDETFSAALANTLA</sequence>
<feature type="chain" id="PRO_0000235644" description="5'-nucleotidase SurE">
    <location>
        <begin position="1"/>
        <end position="255"/>
    </location>
</feature>
<feature type="binding site" evidence="1">
    <location>
        <position position="8"/>
    </location>
    <ligand>
        <name>a divalent metal cation</name>
        <dbReference type="ChEBI" id="CHEBI:60240"/>
    </ligand>
</feature>
<feature type="binding site" evidence="1">
    <location>
        <position position="9"/>
    </location>
    <ligand>
        <name>a divalent metal cation</name>
        <dbReference type="ChEBI" id="CHEBI:60240"/>
    </ligand>
</feature>
<feature type="binding site" evidence="1">
    <location>
        <position position="40"/>
    </location>
    <ligand>
        <name>a divalent metal cation</name>
        <dbReference type="ChEBI" id="CHEBI:60240"/>
    </ligand>
</feature>
<feature type="binding site" evidence="1">
    <location>
        <position position="93"/>
    </location>
    <ligand>
        <name>a divalent metal cation</name>
        <dbReference type="ChEBI" id="CHEBI:60240"/>
    </ligand>
</feature>
<reference key="1">
    <citation type="journal article" date="2004" name="Nat. Biotechnol.">
        <title>Complete genome sequence of the metabolically versatile photosynthetic bacterium Rhodopseudomonas palustris.</title>
        <authorList>
            <person name="Larimer F.W."/>
            <person name="Chain P."/>
            <person name="Hauser L."/>
            <person name="Lamerdin J.E."/>
            <person name="Malfatti S."/>
            <person name="Do L."/>
            <person name="Land M.L."/>
            <person name="Pelletier D.A."/>
            <person name="Beatty J.T."/>
            <person name="Lang A.S."/>
            <person name="Tabita F.R."/>
            <person name="Gibson J.L."/>
            <person name="Hanson T.E."/>
            <person name="Bobst C."/>
            <person name="Torres y Torres J.L."/>
            <person name="Peres C."/>
            <person name="Harrison F.H."/>
            <person name="Gibson J."/>
            <person name="Harwood C.S."/>
        </authorList>
    </citation>
    <scope>NUCLEOTIDE SEQUENCE [LARGE SCALE GENOMIC DNA]</scope>
    <source>
        <strain>ATCC BAA-98 / CGA009</strain>
    </source>
</reference>
<protein>
    <recommendedName>
        <fullName evidence="1">5'-nucleotidase SurE</fullName>
        <ecNumber evidence="1">3.1.3.5</ecNumber>
    </recommendedName>
    <alternativeName>
        <fullName evidence="1">Nucleoside 5'-monophosphate phosphohydrolase</fullName>
    </alternativeName>
</protein>
<accession>Q6N5X7</accession>
<gene>
    <name evidence="1" type="primary">surE</name>
    <name type="ordered locus">RPA2841</name>
</gene>
<evidence type="ECO:0000255" key="1">
    <source>
        <dbReference type="HAMAP-Rule" id="MF_00060"/>
    </source>
</evidence>
<organism>
    <name type="scientific">Rhodopseudomonas palustris (strain ATCC BAA-98 / CGA009)</name>
    <dbReference type="NCBI Taxonomy" id="258594"/>
    <lineage>
        <taxon>Bacteria</taxon>
        <taxon>Pseudomonadati</taxon>
        <taxon>Pseudomonadota</taxon>
        <taxon>Alphaproteobacteria</taxon>
        <taxon>Hyphomicrobiales</taxon>
        <taxon>Nitrobacteraceae</taxon>
        <taxon>Rhodopseudomonas</taxon>
    </lineage>
</organism>